<keyword id="KW-0119">Carbohydrate metabolism</keyword>
<keyword id="KW-0413">Isomerase</keyword>
<keyword id="KW-0479">Metal-binding</keyword>
<keyword id="KW-1185">Reference proteome</keyword>
<keyword id="KW-0862">Zinc</keyword>
<gene>
    <name evidence="1" type="primary">ulaF</name>
    <name type="ordered locus">SF4353</name>
    <name type="ordered locus">S4623</name>
</gene>
<comment type="function">
    <text evidence="1">Catalyzes the isomerization of L-ribulose 5-phosphate to D-xylulose 5-phosphate. Is involved in the anaerobic L-ascorbate utilization.</text>
</comment>
<comment type="catalytic activity">
    <reaction evidence="1">
        <text>L-ribulose 5-phosphate = D-xylulose 5-phosphate</text>
        <dbReference type="Rhea" id="RHEA:22368"/>
        <dbReference type="ChEBI" id="CHEBI:57737"/>
        <dbReference type="ChEBI" id="CHEBI:58226"/>
        <dbReference type="EC" id="5.1.3.4"/>
    </reaction>
</comment>
<comment type="cofactor">
    <cofactor evidence="1">
        <name>Zn(2+)</name>
        <dbReference type="ChEBI" id="CHEBI:29105"/>
    </cofactor>
    <text evidence="1">Binds 1 zinc ion per subunit.</text>
</comment>
<comment type="pathway">
    <text evidence="1">Cofactor degradation; L-ascorbate degradation; D-xylulose 5-phosphate from L-ascorbate: step 4/4.</text>
</comment>
<comment type="induction">
    <text evidence="1">Induced by L-ascorbate. Repressed by UlaR.</text>
</comment>
<comment type="similarity">
    <text evidence="1">Belongs to the aldolase class II family. AraD/FucA subfamily.</text>
</comment>
<accession>Q83P26</accession>
<accession>Q7UAK5</accession>
<evidence type="ECO:0000255" key="1">
    <source>
        <dbReference type="HAMAP-Rule" id="MF_01952"/>
    </source>
</evidence>
<protein>
    <recommendedName>
        <fullName evidence="1">L-ribulose-5-phosphate 4-epimerase UlaF</fullName>
        <ecNumber evidence="1">5.1.3.4</ecNumber>
    </recommendedName>
    <alternativeName>
        <fullName evidence="1">L-ascorbate utilization protein F</fullName>
    </alternativeName>
    <alternativeName>
        <fullName evidence="1">Phosphoribulose isomerase</fullName>
    </alternativeName>
</protein>
<sequence>MQKLKQQVFEANMDLPRYGLVTFTWGNVSAIDRERGLVVIKPSGVAYETMKADDMVVVDMSGKVVEGEYRPSSDTATHLELYRRYPSLGGIVHTHSTHATAWAQAGLAIPALGTTHADYFFGDIPCTRGLSEEEVQGEYELNTGKVIIETLGNAEPLHTPGIVVYQHGPFAWGKDAHDAVHNAVVMEEVAKMAWIARSINPQLNHIDSYLMNKHFMRKHGPNAYYGQK</sequence>
<feature type="chain" id="PRO_0000233249" description="L-ribulose-5-phosphate 4-epimerase UlaF">
    <location>
        <begin position="1"/>
        <end position="228"/>
    </location>
</feature>
<feature type="active site" description="Proton donor/acceptor" evidence="1">
    <location>
        <position position="118"/>
    </location>
</feature>
<feature type="active site" description="Proton donor/acceptor" evidence="1">
    <location>
        <position position="225"/>
    </location>
</feature>
<feature type="binding site" evidence="1">
    <location>
        <begin position="26"/>
        <end position="27"/>
    </location>
    <ligand>
        <name>substrate</name>
    </ligand>
</feature>
<feature type="binding site" evidence="1">
    <location>
        <begin position="43"/>
        <end position="44"/>
    </location>
    <ligand>
        <name>substrate</name>
    </ligand>
</feature>
<feature type="binding site" evidence="1">
    <location>
        <begin position="72"/>
        <end position="73"/>
    </location>
    <ligand>
        <name>substrate</name>
    </ligand>
</feature>
<feature type="binding site" evidence="1">
    <location>
        <position position="74"/>
    </location>
    <ligand>
        <name>Zn(2+)</name>
        <dbReference type="ChEBI" id="CHEBI:29105"/>
    </ligand>
</feature>
<feature type="binding site" evidence="1">
    <location>
        <position position="93"/>
    </location>
    <ligand>
        <name>Zn(2+)</name>
        <dbReference type="ChEBI" id="CHEBI:29105"/>
    </ligand>
</feature>
<feature type="binding site" evidence="1">
    <location>
        <position position="95"/>
    </location>
    <ligand>
        <name>Zn(2+)</name>
        <dbReference type="ChEBI" id="CHEBI:29105"/>
    </ligand>
</feature>
<feature type="binding site" evidence="1">
    <location>
        <position position="167"/>
    </location>
    <ligand>
        <name>Zn(2+)</name>
        <dbReference type="ChEBI" id="CHEBI:29105"/>
    </ligand>
</feature>
<name>ULAF_SHIFL</name>
<organism>
    <name type="scientific">Shigella flexneri</name>
    <dbReference type="NCBI Taxonomy" id="623"/>
    <lineage>
        <taxon>Bacteria</taxon>
        <taxon>Pseudomonadati</taxon>
        <taxon>Pseudomonadota</taxon>
        <taxon>Gammaproteobacteria</taxon>
        <taxon>Enterobacterales</taxon>
        <taxon>Enterobacteriaceae</taxon>
        <taxon>Shigella</taxon>
    </lineage>
</organism>
<proteinExistence type="inferred from homology"/>
<dbReference type="EC" id="5.1.3.4" evidence="1"/>
<dbReference type="EMBL" id="AE005674">
    <property type="protein sequence ID" value="AAN45770.2"/>
    <property type="molecule type" value="Genomic_DNA"/>
</dbReference>
<dbReference type="EMBL" id="AE014073">
    <property type="protein sequence ID" value="AAP19552.1"/>
    <property type="molecule type" value="Genomic_DNA"/>
</dbReference>
<dbReference type="RefSeq" id="WP_001170813.1">
    <property type="nucleotide sequence ID" value="NZ_WPGW01000113.1"/>
</dbReference>
<dbReference type="SMR" id="Q83P26"/>
<dbReference type="STRING" id="198214.SF4353"/>
<dbReference type="PaxDb" id="198214-SF4353"/>
<dbReference type="KEGG" id="sfl:SF4353"/>
<dbReference type="KEGG" id="sfx:S4623"/>
<dbReference type="PATRIC" id="fig|198214.7.peg.5132"/>
<dbReference type="HOGENOM" id="CLU_006033_5_0_6"/>
<dbReference type="UniPathway" id="UPA00263">
    <property type="reaction ID" value="UER00380"/>
</dbReference>
<dbReference type="Proteomes" id="UP000001006">
    <property type="component" value="Chromosome"/>
</dbReference>
<dbReference type="Proteomes" id="UP000002673">
    <property type="component" value="Chromosome"/>
</dbReference>
<dbReference type="GO" id="GO:0005829">
    <property type="term" value="C:cytosol"/>
    <property type="evidence" value="ECO:0007669"/>
    <property type="project" value="TreeGrafter"/>
</dbReference>
<dbReference type="GO" id="GO:0016832">
    <property type="term" value="F:aldehyde-lyase activity"/>
    <property type="evidence" value="ECO:0007669"/>
    <property type="project" value="TreeGrafter"/>
</dbReference>
<dbReference type="GO" id="GO:0008742">
    <property type="term" value="F:L-ribulose-phosphate 4-epimerase activity"/>
    <property type="evidence" value="ECO:0007669"/>
    <property type="project" value="UniProtKB-UniRule"/>
</dbReference>
<dbReference type="GO" id="GO:0008270">
    <property type="term" value="F:zinc ion binding"/>
    <property type="evidence" value="ECO:0007669"/>
    <property type="project" value="UniProtKB-UniRule"/>
</dbReference>
<dbReference type="GO" id="GO:0019854">
    <property type="term" value="P:L-ascorbic acid catabolic process"/>
    <property type="evidence" value="ECO:0007669"/>
    <property type="project" value="UniProtKB-UniRule"/>
</dbReference>
<dbReference type="GO" id="GO:0019323">
    <property type="term" value="P:pentose catabolic process"/>
    <property type="evidence" value="ECO:0007669"/>
    <property type="project" value="TreeGrafter"/>
</dbReference>
<dbReference type="CDD" id="cd00398">
    <property type="entry name" value="Aldolase_II"/>
    <property type="match status" value="1"/>
</dbReference>
<dbReference type="FunFam" id="3.40.225.10:FF:000001">
    <property type="entry name" value="L-ribulose-5-phosphate 4-epimerase UlaF"/>
    <property type="match status" value="1"/>
</dbReference>
<dbReference type="Gene3D" id="3.40.225.10">
    <property type="entry name" value="Class II aldolase/adducin N-terminal domain"/>
    <property type="match status" value="1"/>
</dbReference>
<dbReference type="HAMAP" id="MF_01952">
    <property type="entry name" value="UlaF"/>
    <property type="match status" value="1"/>
</dbReference>
<dbReference type="InterPro" id="IPR050197">
    <property type="entry name" value="Aldolase_class_II_sugar_metab"/>
</dbReference>
<dbReference type="InterPro" id="IPR001303">
    <property type="entry name" value="Aldolase_II/adducin_N"/>
</dbReference>
<dbReference type="InterPro" id="IPR036409">
    <property type="entry name" value="Aldolase_II/adducin_N_sf"/>
</dbReference>
<dbReference type="InterPro" id="IPR023499">
    <property type="entry name" value="UlaF"/>
</dbReference>
<dbReference type="NCBIfam" id="NF006047">
    <property type="entry name" value="PRK08193.1"/>
    <property type="match status" value="1"/>
</dbReference>
<dbReference type="NCBIfam" id="NF009003">
    <property type="entry name" value="PRK12348.1"/>
    <property type="match status" value="1"/>
</dbReference>
<dbReference type="PANTHER" id="PTHR22789">
    <property type="entry name" value="FUCULOSE PHOSPHATE ALDOLASE"/>
    <property type="match status" value="1"/>
</dbReference>
<dbReference type="PANTHER" id="PTHR22789:SF9">
    <property type="entry name" value="L-RIBULOSE-5-PHOSPHATE 4-EPIMERASE ULAF"/>
    <property type="match status" value="1"/>
</dbReference>
<dbReference type="Pfam" id="PF00596">
    <property type="entry name" value="Aldolase_II"/>
    <property type="match status" value="1"/>
</dbReference>
<dbReference type="SMART" id="SM01007">
    <property type="entry name" value="Aldolase_II"/>
    <property type="match status" value="1"/>
</dbReference>
<dbReference type="SUPFAM" id="SSF53639">
    <property type="entry name" value="AraD/HMP-PK domain-like"/>
    <property type="match status" value="1"/>
</dbReference>
<reference key="1">
    <citation type="journal article" date="2002" name="Nucleic Acids Res.">
        <title>Genome sequence of Shigella flexneri 2a: insights into pathogenicity through comparison with genomes of Escherichia coli K12 and O157.</title>
        <authorList>
            <person name="Jin Q."/>
            <person name="Yuan Z."/>
            <person name="Xu J."/>
            <person name="Wang Y."/>
            <person name="Shen Y."/>
            <person name="Lu W."/>
            <person name="Wang J."/>
            <person name="Liu H."/>
            <person name="Yang J."/>
            <person name="Yang F."/>
            <person name="Zhang X."/>
            <person name="Zhang J."/>
            <person name="Yang G."/>
            <person name="Wu H."/>
            <person name="Qu D."/>
            <person name="Dong J."/>
            <person name="Sun L."/>
            <person name="Xue Y."/>
            <person name="Zhao A."/>
            <person name="Gao Y."/>
            <person name="Zhu J."/>
            <person name="Kan B."/>
            <person name="Ding K."/>
            <person name="Chen S."/>
            <person name="Cheng H."/>
            <person name="Yao Z."/>
            <person name="He B."/>
            <person name="Chen R."/>
            <person name="Ma D."/>
            <person name="Qiang B."/>
            <person name="Wen Y."/>
            <person name="Hou Y."/>
            <person name="Yu J."/>
        </authorList>
    </citation>
    <scope>NUCLEOTIDE SEQUENCE [LARGE SCALE GENOMIC DNA]</scope>
    <source>
        <strain>301 / Serotype 2a</strain>
    </source>
</reference>
<reference key="2">
    <citation type="journal article" date="2003" name="Infect. Immun.">
        <title>Complete genome sequence and comparative genomics of Shigella flexneri serotype 2a strain 2457T.</title>
        <authorList>
            <person name="Wei J."/>
            <person name="Goldberg M.B."/>
            <person name="Burland V."/>
            <person name="Venkatesan M.M."/>
            <person name="Deng W."/>
            <person name="Fournier G."/>
            <person name="Mayhew G.F."/>
            <person name="Plunkett G. III"/>
            <person name="Rose D.J."/>
            <person name="Darling A."/>
            <person name="Mau B."/>
            <person name="Perna N.T."/>
            <person name="Payne S.M."/>
            <person name="Runyen-Janecky L.J."/>
            <person name="Zhou S."/>
            <person name="Schwartz D.C."/>
            <person name="Blattner F.R."/>
        </authorList>
    </citation>
    <scope>NUCLEOTIDE SEQUENCE [LARGE SCALE GENOMIC DNA]</scope>
    <source>
        <strain>ATCC 700930 / 2457T / Serotype 2a</strain>
    </source>
</reference>